<proteinExistence type="inferred from homology"/>
<comment type="function">
    <text evidence="1">Catalyzes the stereoinversion of LL-2,6-diaminopimelate (L,L-DAP) to meso-diaminopimelate (meso-DAP), a precursor of L-lysine and an essential component of the bacterial peptidoglycan.</text>
</comment>
<comment type="catalytic activity">
    <reaction evidence="1">
        <text>(2S,6S)-2,6-diaminopimelate = meso-2,6-diaminopimelate</text>
        <dbReference type="Rhea" id="RHEA:15393"/>
        <dbReference type="ChEBI" id="CHEBI:57609"/>
        <dbReference type="ChEBI" id="CHEBI:57791"/>
        <dbReference type="EC" id="5.1.1.7"/>
    </reaction>
</comment>
<comment type="pathway">
    <text evidence="1">Amino-acid biosynthesis; L-lysine biosynthesis via DAP pathway; DL-2,6-diaminopimelate from LL-2,6-diaminopimelate: step 1/1.</text>
</comment>
<comment type="subunit">
    <text evidence="1">Homodimer.</text>
</comment>
<comment type="subcellular location">
    <subcellularLocation>
        <location evidence="1">Cytoplasm</location>
    </subcellularLocation>
</comment>
<comment type="similarity">
    <text evidence="1">Belongs to the diaminopimelate epimerase family.</text>
</comment>
<sequence>MKLKFTKMQGLGNDFAVLDGVRQTIRLTPEQIRKLGDRRFGIGFDQLLLVEPPQDAGNDFSYRIFNCDGGEVEQCGNGARCFARFVFDHGLTDRREIRVETARGVIVPRLADDGLVTVDMGPPRFRPADIPFVAAEDAVIHELEVAGQILGVTVVSMGNPHAVQVVDDVDTAPVTAFGPLIENHLRFPARVNAGFMQIESRTAICLRVFERGSGETLACGTGACAAVVAGIRRGLLDADTPVTVQTRGGELRIRWAGDGHPVWMTGPAVTVFEGEITL</sequence>
<dbReference type="EC" id="5.1.1.7" evidence="1"/>
<dbReference type="EMBL" id="CP001154">
    <property type="protein sequence ID" value="ACO74840.1"/>
    <property type="molecule type" value="Genomic_DNA"/>
</dbReference>
<dbReference type="RefSeq" id="WP_012697326.1">
    <property type="nucleotide sequence ID" value="NC_012559.1"/>
</dbReference>
<dbReference type="SMR" id="C1D8Q0"/>
<dbReference type="STRING" id="557598.LHK_01856"/>
<dbReference type="GeneID" id="75108763"/>
<dbReference type="KEGG" id="lhk:LHK_01856"/>
<dbReference type="eggNOG" id="COG0253">
    <property type="taxonomic scope" value="Bacteria"/>
</dbReference>
<dbReference type="HOGENOM" id="CLU_053306_1_1_4"/>
<dbReference type="UniPathway" id="UPA00034">
    <property type="reaction ID" value="UER00025"/>
</dbReference>
<dbReference type="Proteomes" id="UP000002010">
    <property type="component" value="Chromosome"/>
</dbReference>
<dbReference type="GO" id="GO:0005829">
    <property type="term" value="C:cytosol"/>
    <property type="evidence" value="ECO:0007669"/>
    <property type="project" value="TreeGrafter"/>
</dbReference>
<dbReference type="GO" id="GO:0008837">
    <property type="term" value="F:diaminopimelate epimerase activity"/>
    <property type="evidence" value="ECO:0007669"/>
    <property type="project" value="UniProtKB-UniRule"/>
</dbReference>
<dbReference type="GO" id="GO:0009089">
    <property type="term" value="P:lysine biosynthetic process via diaminopimelate"/>
    <property type="evidence" value="ECO:0007669"/>
    <property type="project" value="UniProtKB-UniRule"/>
</dbReference>
<dbReference type="FunFam" id="3.10.310.10:FF:000001">
    <property type="entry name" value="Diaminopimelate epimerase"/>
    <property type="match status" value="1"/>
</dbReference>
<dbReference type="FunFam" id="3.10.310.10:FF:000004">
    <property type="entry name" value="Diaminopimelate epimerase"/>
    <property type="match status" value="1"/>
</dbReference>
<dbReference type="Gene3D" id="3.10.310.10">
    <property type="entry name" value="Diaminopimelate Epimerase, Chain A, domain 1"/>
    <property type="match status" value="2"/>
</dbReference>
<dbReference type="HAMAP" id="MF_00197">
    <property type="entry name" value="DAP_epimerase"/>
    <property type="match status" value="1"/>
</dbReference>
<dbReference type="InterPro" id="IPR018510">
    <property type="entry name" value="DAP_epimerase_AS"/>
</dbReference>
<dbReference type="InterPro" id="IPR001653">
    <property type="entry name" value="DAP_epimerase_DapF"/>
</dbReference>
<dbReference type="NCBIfam" id="TIGR00652">
    <property type="entry name" value="DapF"/>
    <property type="match status" value="1"/>
</dbReference>
<dbReference type="PANTHER" id="PTHR31689:SF0">
    <property type="entry name" value="DIAMINOPIMELATE EPIMERASE"/>
    <property type="match status" value="1"/>
</dbReference>
<dbReference type="PANTHER" id="PTHR31689">
    <property type="entry name" value="DIAMINOPIMELATE EPIMERASE, CHLOROPLASTIC"/>
    <property type="match status" value="1"/>
</dbReference>
<dbReference type="Pfam" id="PF01678">
    <property type="entry name" value="DAP_epimerase"/>
    <property type="match status" value="2"/>
</dbReference>
<dbReference type="SUPFAM" id="SSF54506">
    <property type="entry name" value="Diaminopimelate epimerase-like"/>
    <property type="match status" value="1"/>
</dbReference>
<dbReference type="PROSITE" id="PS01326">
    <property type="entry name" value="DAP_EPIMERASE"/>
    <property type="match status" value="1"/>
</dbReference>
<gene>
    <name evidence="1" type="primary">dapF</name>
    <name type="ordered locus">LHK_01856</name>
</gene>
<feature type="chain" id="PRO_1000124418" description="Diaminopimelate epimerase">
    <location>
        <begin position="1"/>
        <end position="278"/>
    </location>
</feature>
<feature type="active site" description="Proton donor" evidence="1">
    <location>
        <position position="75"/>
    </location>
</feature>
<feature type="active site" description="Proton acceptor" evidence="1">
    <location>
        <position position="219"/>
    </location>
</feature>
<feature type="binding site" evidence="1">
    <location>
        <position position="13"/>
    </location>
    <ligand>
        <name>substrate</name>
    </ligand>
</feature>
<feature type="binding site" evidence="1">
    <location>
        <position position="46"/>
    </location>
    <ligand>
        <name>substrate</name>
    </ligand>
</feature>
<feature type="binding site" evidence="1">
    <location>
        <position position="66"/>
    </location>
    <ligand>
        <name>substrate</name>
    </ligand>
</feature>
<feature type="binding site" evidence="1">
    <location>
        <begin position="76"/>
        <end position="77"/>
    </location>
    <ligand>
        <name>substrate</name>
    </ligand>
</feature>
<feature type="binding site" evidence="1">
    <location>
        <position position="159"/>
    </location>
    <ligand>
        <name>substrate</name>
    </ligand>
</feature>
<feature type="binding site" evidence="1">
    <location>
        <position position="192"/>
    </location>
    <ligand>
        <name>substrate</name>
    </ligand>
</feature>
<feature type="binding site" evidence="1">
    <location>
        <begin position="210"/>
        <end position="211"/>
    </location>
    <ligand>
        <name>substrate</name>
    </ligand>
</feature>
<feature type="binding site" evidence="1">
    <location>
        <begin position="220"/>
        <end position="221"/>
    </location>
    <ligand>
        <name>substrate</name>
    </ligand>
</feature>
<feature type="site" description="Could be important to modulate the pK values of the two catalytic cysteine residues" evidence="1">
    <location>
        <position position="161"/>
    </location>
</feature>
<feature type="site" description="Could be important to modulate the pK values of the two catalytic cysteine residues" evidence="1">
    <location>
        <position position="210"/>
    </location>
</feature>
<evidence type="ECO:0000255" key="1">
    <source>
        <dbReference type="HAMAP-Rule" id="MF_00197"/>
    </source>
</evidence>
<name>DAPF_LARHH</name>
<protein>
    <recommendedName>
        <fullName evidence="1">Diaminopimelate epimerase</fullName>
        <shortName evidence="1">DAP epimerase</shortName>
        <ecNumber evidence="1">5.1.1.7</ecNumber>
    </recommendedName>
    <alternativeName>
        <fullName evidence="1">PLP-independent amino acid racemase</fullName>
    </alternativeName>
</protein>
<reference key="1">
    <citation type="journal article" date="2009" name="PLoS Genet.">
        <title>The complete genome and proteome of Laribacter hongkongensis reveal potential mechanisms for adaptations to different temperatures and habitats.</title>
        <authorList>
            <person name="Woo P.C.Y."/>
            <person name="Lau S.K.P."/>
            <person name="Tse H."/>
            <person name="Teng J.L.L."/>
            <person name="Curreem S.O."/>
            <person name="Tsang A.K.L."/>
            <person name="Fan R.Y.Y."/>
            <person name="Wong G.K.M."/>
            <person name="Huang Y."/>
            <person name="Loman N.J."/>
            <person name="Snyder L.A.S."/>
            <person name="Cai J.J."/>
            <person name="Huang J.-D."/>
            <person name="Mak W."/>
            <person name="Pallen M.J."/>
            <person name="Lok S."/>
            <person name="Yuen K.-Y."/>
        </authorList>
    </citation>
    <scope>NUCLEOTIDE SEQUENCE [LARGE SCALE GENOMIC DNA]</scope>
    <source>
        <strain>HLHK9</strain>
    </source>
</reference>
<keyword id="KW-0028">Amino-acid biosynthesis</keyword>
<keyword id="KW-0963">Cytoplasm</keyword>
<keyword id="KW-0413">Isomerase</keyword>
<keyword id="KW-0457">Lysine biosynthesis</keyword>
<keyword id="KW-1185">Reference proteome</keyword>
<accession>C1D8Q0</accession>
<organism>
    <name type="scientific">Laribacter hongkongensis (strain HLHK9)</name>
    <dbReference type="NCBI Taxonomy" id="557598"/>
    <lineage>
        <taxon>Bacteria</taxon>
        <taxon>Pseudomonadati</taxon>
        <taxon>Pseudomonadota</taxon>
        <taxon>Betaproteobacteria</taxon>
        <taxon>Neisseriales</taxon>
        <taxon>Aquaspirillaceae</taxon>
        <taxon>Laribacter</taxon>
    </lineage>
</organism>